<dbReference type="EMBL" id="AE014074">
    <property type="protein sequence ID" value="AAM80405.1"/>
    <property type="molecule type" value="Genomic_DNA"/>
</dbReference>
<dbReference type="RefSeq" id="WP_002982194.1">
    <property type="nucleotide sequence ID" value="NC_004070.1"/>
</dbReference>
<dbReference type="SMR" id="P0DH00"/>
<dbReference type="KEGG" id="spg:SpyM3_1798"/>
<dbReference type="HOGENOM" id="CLU_162466_0_0_9"/>
<dbReference type="Proteomes" id="UP000000564">
    <property type="component" value="Chromosome"/>
</dbReference>
<dbReference type="HAMAP" id="MF_01507">
    <property type="entry name" value="UPF0297"/>
    <property type="match status" value="1"/>
</dbReference>
<dbReference type="InterPro" id="IPR009309">
    <property type="entry name" value="IreB"/>
</dbReference>
<dbReference type="NCBIfam" id="NF003997">
    <property type="entry name" value="PRK05473.1"/>
    <property type="match status" value="1"/>
</dbReference>
<dbReference type="PANTHER" id="PTHR40067">
    <property type="entry name" value="UPF0297 PROTEIN YRZL"/>
    <property type="match status" value="1"/>
</dbReference>
<dbReference type="PANTHER" id="PTHR40067:SF1">
    <property type="entry name" value="UPF0297 PROTEIN YRZL"/>
    <property type="match status" value="1"/>
</dbReference>
<dbReference type="Pfam" id="PF06135">
    <property type="entry name" value="IreB"/>
    <property type="match status" value="1"/>
</dbReference>
<dbReference type="PIRSF" id="PIRSF037258">
    <property type="entry name" value="DUF965_bac"/>
    <property type="match status" value="1"/>
</dbReference>
<name>Y1798_STRP3</name>
<proteinExistence type="inferred from homology"/>
<protein>
    <recommendedName>
        <fullName>UPF0297 protein SpyM3_1798</fullName>
    </recommendedName>
</protein>
<evidence type="ECO:0000305" key="1"/>
<accession>P0DH00</accession>
<accession>P60361</accession>
<accession>Q99XP3</accession>
<reference key="1">
    <citation type="journal article" date="2002" name="Proc. Natl. Acad. Sci. U.S.A.">
        <title>Genome sequence of a serotype M3 strain of group A Streptococcus: phage-encoded toxins, the high-virulence phenotype, and clone emergence.</title>
        <authorList>
            <person name="Beres S.B."/>
            <person name="Sylva G.L."/>
            <person name="Barbian K.D."/>
            <person name="Lei B."/>
            <person name="Hoff J.S."/>
            <person name="Mammarella N.D."/>
            <person name="Liu M.-Y."/>
            <person name="Smoot J.C."/>
            <person name="Porcella S.F."/>
            <person name="Parkins L.D."/>
            <person name="Campbell D.S."/>
            <person name="Smith T.M."/>
            <person name="McCormick J.K."/>
            <person name="Leung D.Y.M."/>
            <person name="Schlievert P.M."/>
            <person name="Musser J.M."/>
        </authorList>
    </citation>
    <scope>NUCLEOTIDE SEQUENCE [LARGE SCALE GENOMIC DNA]</scope>
    <source>
        <strain>ATCC BAA-595 / MGAS315</strain>
    </source>
</reference>
<comment type="similarity">
    <text evidence="1">Belongs to the UPF0297 family.</text>
</comment>
<sequence length="89" mass="10364">MGFTDETVRFKLDDGDKRQISETLTAVYHSLDEKGYNPINQIVGYVLSGDPAYVPRYNDARNQIRKYERDEIVEELVRYYLQGNGIDVK</sequence>
<organism>
    <name type="scientific">Streptococcus pyogenes serotype M3 (strain ATCC BAA-595 / MGAS315)</name>
    <dbReference type="NCBI Taxonomy" id="198466"/>
    <lineage>
        <taxon>Bacteria</taxon>
        <taxon>Bacillati</taxon>
        <taxon>Bacillota</taxon>
        <taxon>Bacilli</taxon>
        <taxon>Lactobacillales</taxon>
        <taxon>Streptococcaceae</taxon>
        <taxon>Streptococcus</taxon>
    </lineage>
</organism>
<gene>
    <name type="ordered locus">SpyM3_1798</name>
</gene>
<feature type="chain" id="PRO_0000216995" description="UPF0297 protein SpyM3_1798">
    <location>
        <begin position="1"/>
        <end position="89"/>
    </location>
</feature>